<gene>
    <name type="primary">hopD</name>
    <name type="ordered locus">STM3442</name>
</gene>
<comment type="similarity">
    <text evidence="1">Belongs to the peptidase A24 family.</text>
</comment>
<name>HOPD_SALTY</name>
<organism>
    <name type="scientific">Salmonella typhimurium (strain LT2 / SGSC1412 / ATCC 700720)</name>
    <dbReference type="NCBI Taxonomy" id="99287"/>
    <lineage>
        <taxon>Bacteria</taxon>
        <taxon>Pseudomonadati</taxon>
        <taxon>Pseudomonadota</taxon>
        <taxon>Gammaproteobacteria</taxon>
        <taxon>Enterobacterales</taxon>
        <taxon>Enterobacteriaceae</taxon>
        <taxon>Salmonella</taxon>
    </lineage>
</organism>
<sequence length="155" mass="17099">MFVALPFLIFYASFSLLLGIYDARTGLLPDRFTCPLLWGGLLYHQICLPERLPDALWGAIAGYGGFALIYWGYRLRYQKEGLGYGDVKYLAALGAWHCWETLPLLVFLAAMLACGGFGVALLVRGKSALINPLPFGPWLAVAGFITGWKVFFPDG</sequence>
<accession>O68927</accession>
<dbReference type="EMBL" id="AF058449">
    <property type="protein sequence ID" value="AAC14284.1"/>
    <property type="molecule type" value="Genomic_DNA"/>
</dbReference>
<dbReference type="EMBL" id="AE006468">
    <property type="protein sequence ID" value="AAL22305.1"/>
    <property type="molecule type" value="Genomic_DNA"/>
</dbReference>
<dbReference type="RefSeq" id="NP_462346.1">
    <property type="nucleotide sequence ID" value="NC_003197.2"/>
</dbReference>
<dbReference type="RefSeq" id="WP_000495848.1">
    <property type="nucleotide sequence ID" value="NC_003197.2"/>
</dbReference>
<dbReference type="STRING" id="99287.STM3442"/>
<dbReference type="MEROPS" id="A24.003"/>
<dbReference type="PaxDb" id="99287-STM3442"/>
<dbReference type="GeneID" id="1254965"/>
<dbReference type="KEGG" id="stm:STM3442"/>
<dbReference type="PATRIC" id="fig|99287.12.peg.3639"/>
<dbReference type="HOGENOM" id="CLU_057101_5_1_6"/>
<dbReference type="PhylomeDB" id="O68927"/>
<dbReference type="BioCyc" id="SENT99287:STM3442-MONOMER"/>
<dbReference type="Proteomes" id="UP000001014">
    <property type="component" value="Chromosome"/>
</dbReference>
<dbReference type="GO" id="GO:0016020">
    <property type="term" value="C:membrane"/>
    <property type="evidence" value="ECO:0007669"/>
    <property type="project" value="InterPro"/>
</dbReference>
<dbReference type="GO" id="GO:0004190">
    <property type="term" value="F:aspartic-type endopeptidase activity"/>
    <property type="evidence" value="ECO:0007669"/>
    <property type="project" value="InterPro"/>
</dbReference>
<dbReference type="Gene3D" id="1.20.120.1220">
    <property type="match status" value="1"/>
</dbReference>
<dbReference type="InterPro" id="IPR014032">
    <property type="entry name" value="Peptidase_A24A_bac"/>
</dbReference>
<dbReference type="InterPro" id="IPR000045">
    <property type="entry name" value="Prepilin_IV_endopep_pep"/>
</dbReference>
<dbReference type="InterPro" id="IPR050882">
    <property type="entry name" value="Prepilin_peptidase/N-MTase"/>
</dbReference>
<dbReference type="PANTHER" id="PTHR30487:SF0">
    <property type="entry name" value="PREPILIN LEADER PEPTIDASE_N-METHYLTRANSFERASE-RELATED"/>
    <property type="match status" value="1"/>
</dbReference>
<dbReference type="PANTHER" id="PTHR30487">
    <property type="entry name" value="TYPE 4 PREPILIN-LIKE PROTEINS LEADER PEPTIDE-PROCESSING ENZYME"/>
    <property type="match status" value="1"/>
</dbReference>
<dbReference type="Pfam" id="PF01478">
    <property type="entry name" value="Peptidase_A24"/>
    <property type="match status" value="1"/>
</dbReference>
<dbReference type="PRINTS" id="PR00864">
    <property type="entry name" value="PREPILNPTASE"/>
</dbReference>
<reference key="1">
    <citation type="submission" date="1998-04" db="EMBL/GenBank/DDBJ databases">
        <authorList>
            <person name="Noorani S.M."/>
            <person name="Lindahl L."/>
            <person name="Zengel J.M."/>
        </authorList>
    </citation>
    <scope>NUCLEOTIDE SEQUENCE [GENOMIC DNA]</scope>
    <source>
        <strain>LT2</strain>
    </source>
</reference>
<reference key="2">
    <citation type="journal article" date="2001" name="Nature">
        <title>Complete genome sequence of Salmonella enterica serovar Typhimurium LT2.</title>
        <authorList>
            <person name="McClelland M."/>
            <person name="Sanderson K.E."/>
            <person name="Spieth J."/>
            <person name="Clifton S.W."/>
            <person name="Latreille P."/>
            <person name="Courtney L."/>
            <person name="Porwollik S."/>
            <person name="Ali J."/>
            <person name="Dante M."/>
            <person name="Du F."/>
            <person name="Hou S."/>
            <person name="Layman D."/>
            <person name="Leonard S."/>
            <person name="Nguyen C."/>
            <person name="Scott K."/>
            <person name="Holmes A."/>
            <person name="Grewal N."/>
            <person name="Mulvaney E."/>
            <person name="Ryan E."/>
            <person name="Sun H."/>
            <person name="Florea L."/>
            <person name="Miller W."/>
            <person name="Stoneking T."/>
            <person name="Nhan M."/>
            <person name="Waterston R."/>
            <person name="Wilson R.K."/>
        </authorList>
    </citation>
    <scope>NUCLEOTIDE SEQUENCE [LARGE SCALE GENOMIC DNA]</scope>
    <source>
        <strain>LT2 / SGSC1412 / ATCC 700720</strain>
    </source>
</reference>
<proteinExistence type="inferred from homology"/>
<keyword id="KW-1185">Reference proteome</keyword>
<protein>
    <recommendedName>
        <fullName>Leader peptidase HopD</fullName>
    </recommendedName>
</protein>
<evidence type="ECO:0000305" key="1"/>
<feature type="chain" id="PRO_0000192636" description="Leader peptidase HopD">
    <location>
        <begin position="1"/>
        <end position="155"/>
    </location>
</feature>